<protein>
    <recommendedName>
        <fullName evidence="1">Cysteine--tRNA ligase</fullName>
        <ecNumber evidence="1">6.1.1.16</ecNumber>
    </recommendedName>
    <alternativeName>
        <fullName evidence="1">Cysteinyl-tRNA synthetase</fullName>
        <shortName evidence="1">CysRS</shortName>
    </alternativeName>
</protein>
<keyword id="KW-0030">Aminoacyl-tRNA synthetase</keyword>
<keyword id="KW-0067">ATP-binding</keyword>
<keyword id="KW-0963">Cytoplasm</keyword>
<keyword id="KW-0436">Ligase</keyword>
<keyword id="KW-0479">Metal-binding</keyword>
<keyword id="KW-0547">Nucleotide-binding</keyword>
<keyword id="KW-0648">Protein biosynthesis</keyword>
<keyword id="KW-1185">Reference proteome</keyword>
<keyword id="KW-0862">Zinc</keyword>
<organism>
    <name type="scientific">Xanthobacter autotrophicus (strain ATCC BAA-1158 / Py2)</name>
    <dbReference type="NCBI Taxonomy" id="78245"/>
    <lineage>
        <taxon>Bacteria</taxon>
        <taxon>Pseudomonadati</taxon>
        <taxon>Pseudomonadota</taxon>
        <taxon>Alphaproteobacteria</taxon>
        <taxon>Hyphomicrobiales</taxon>
        <taxon>Xanthobacteraceae</taxon>
        <taxon>Xanthobacter</taxon>
    </lineage>
</organism>
<feature type="chain" id="PRO_1000090886" description="Cysteine--tRNA ligase">
    <location>
        <begin position="1"/>
        <end position="462"/>
    </location>
</feature>
<feature type="short sequence motif" description="'HIGH' region">
    <location>
        <begin position="31"/>
        <end position="41"/>
    </location>
</feature>
<feature type="short sequence motif" description="'KMSKS' region">
    <location>
        <begin position="272"/>
        <end position="276"/>
    </location>
</feature>
<feature type="binding site" evidence="1">
    <location>
        <position position="29"/>
    </location>
    <ligand>
        <name>Zn(2+)</name>
        <dbReference type="ChEBI" id="CHEBI:29105"/>
    </ligand>
</feature>
<feature type="binding site" evidence="1">
    <location>
        <position position="214"/>
    </location>
    <ligand>
        <name>Zn(2+)</name>
        <dbReference type="ChEBI" id="CHEBI:29105"/>
    </ligand>
</feature>
<feature type="binding site" evidence="1">
    <location>
        <position position="239"/>
    </location>
    <ligand>
        <name>Zn(2+)</name>
        <dbReference type="ChEBI" id="CHEBI:29105"/>
    </ligand>
</feature>
<feature type="binding site" evidence="1">
    <location>
        <position position="243"/>
    </location>
    <ligand>
        <name>Zn(2+)</name>
        <dbReference type="ChEBI" id="CHEBI:29105"/>
    </ligand>
</feature>
<feature type="binding site" evidence="1">
    <location>
        <position position="275"/>
    </location>
    <ligand>
        <name>ATP</name>
        <dbReference type="ChEBI" id="CHEBI:30616"/>
    </ligand>
</feature>
<proteinExistence type="inferred from homology"/>
<comment type="catalytic activity">
    <reaction evidence="1">
        <text>tRNA(Cys) + L-cysteine + ATP = L-cysteinyl-tRNA(Cys) + AMP + diphosphate</text>
        <dbReference type="Rhea" id="RHEA:17773"/>
        <dbReference type="Rhea" id="RHEA-COMP:9661"/>
        <dbReference type="Rhea" id="RHEA-COMP:9679"/>
        <dbReference type="ChEBI" id="CHEBI:30616"/>
        <dbReference type="ChEBI" id="CHEBI:33019"/>
        <dbReference type="ChEBI" id="CHEBI:35235"/>
        <dbReference type="ChEBI" id="CHEBI:78442"/>
        <dbReference type="ChEBI" id="CHEBI:78517"/>
        <dbReference type="ChEBI" id="CHEBI:456215"/>
        <dbReference type="EC" id="6.1.1.16"/>
    </reaction>
</comment>
<comment type="cofactor">
    <cofactor evidence="1">
        <name>Zn(2+)</name>
        <dbReference type="ChEBI" id="CHEBI:29105"/>
    </cofactor>
    <text evidence="1">Binds 1 zinc ion per subunit.</text>
</comment>
<comment type="subunit">
    <text evidence="1">Monomer.</text>
</comment>
<comment type="subcellular location">
    <subcellularLocation>
        <location evidence="1">Cytoplasm</location>
    </subcellularLocation>
</comment>
<comment type="similarity">
    <text evidence="1">Belongs to the class-I aminoacyl-tRNA synthetase family.</text>
</comment>
<sequence length="462" mass="52085">MELRLYNTLTRSKDTLRPLDPANVRMYVCGPTVYDHAHIGNARPVIVFDVLFRLLRRLYGEGHVKYVRNITDVDDKINARAAERGITIRDLTEETYRWFREDTAALNCLRPTVEPRATEHIAEMRTLIESLVASGHAYVAEEHVLFHVPSMPDYGRLSRRPLDEMVAGARVDVAPYKRDPMDFVLWKPSEAGIPGWPSPCGIATPGRPGWHIECSAMSWRHLGETFDIHGGGIDLVFPHHENEIAQSRCAFHTGVMAQMWMHNGFLMLEGEKMSKSLGNFVTIRELLAEWPGEVLRLAMLSTHYRQPINWTRQGLGFAAKTLDKWYRIIGEAEAETGEGNPFETEIADRLADDLNTPSVITHLHHLAEVAEHEEASSALRRRFKGAANLLGLLGDTETGWRARQKEAIALDEGVIAGLIADRLAARKAKDFKRADQIREELAAQGVVLMDNKDGTTSWEVSR</sequence>
<evidence type="ECO:0000255" key="1">
    <source>
        <dbReference type="HAMAP-Rule" id="MF_00041"/>
    </source>
</evidence>
<accession>A7IPJ0</accession>
<name>SYC_XANP2</name>
<reference key="1">
    <citation type="submission" date="2007-07" db="EMBL/GenBank/DDBJ databases">
        <title>Complete sequence of chromosome of Xanthobacter autotrophicus Py2.</title>
        <authorList>
            <consortium name="US DOE Joint Genome Institute"/>
            <person name="Copeland A."/>
            <person name="Lucas S."/>
            <person name="Lapidus A."/>
            <person name="Barry K."/>
            <person name="Glavina del Rio T."/>
            <person name="Hammon N."/>
            <person name="Israni S."/>
            <person name="Dalin E."/>
            <person name="Tice H."/>
            <person name="Pitluck S."/>
            <person name="Sims D."/>
            <person name="Brettin T."/>
            <person name="Bruce D."/>
            <person name="Detter J.C."/>
            <person name="Han C."/>
            <person name="Tapia R."/>
            <person name="Brainard J."/>
            <person name="Schmutz J."/>
            <person name="Larimer F."/>
            <person name="Land M."/>
            <person name="Hauser L."/>
            <person name="Kyrpides N."/>
            <person name="Kim E."/>
            <person name="Ensigns S.A."/>
            <person name="Richardson P."/>
        </authorList>
    </citation>
    <scope>NUCLEOTIDE SEQUENCE [LARGE SCALE GENOMIC DNA]</scope>
    <source>
        <strain>ATCC BAA-1158 / Py2</strain>
    </source>
</reference>
<gene>
    <name evidence="1" type="primary">cysS</name>
    <name type="ordered locus">Xaut_4717</name>
</gene>
<dbReference type="EC" id="6.1.1.16" evidence="1"/>
<dbReference type="EMBL" id="CP000781">
    <property type="protein sequence ID" value="ABS69936.1"/>
    <property type="molecule type" value="Genomic_DNA"/>
</dbReference>
<dbReference type="SMR" id="A7IPJ0"/>
<dbReference type="STRING" id="78245.Xaut_4717"/>
<dbReference type="KEGG" id="xau:Xaut_4717"/>
<dbReference type="eggNOG" id="COG0215">
    <property type="taxonomic scope" value="Bacteria"/>
</dbReference>
<dbReference type="HOGENOM" id="CLU_013528_0_1_5"/>
<dbReference type="OrthoDB" id="9815130at2"/>
<dbReference type="PhylomeDB" id="A7IPJ0"/>
<dbReference type="Proteomes" id="UP000002417">
    <property type="component" value="Chromosome"/>
</dbReference>
<dbReference type="GO" id="GO:0005829">
    <property type="term" value="C:cytosol"/>
    <property type="evidence" value="ECO:0007669"/>
    <property type="project" value="TreeGrafter"/>
</dbReference>
<dbReference type="GO" id="GO:0005524">
    <property type="term" value="F:ATP binding"/>
    <property type="evidence" value="ECO:0007669"/>
    <property type="project" value="UniProtKB-UniRule"/>
</dbReference>
<dbReference type="GO" id="GO:0004817">
    <property type="term" value="F:cysteine-tRNA ligase activity"/>
    <property type="evidence" value="ECO:0007669"/>
    <property type="project" value="UniProtKB-UniRule"/>
</dbReference>
<dbReference type="GO" id="GO:0008270">
    <property type="term" value="F:zinc ion binding"/>
    <property type="evidence" value="ECO:0007669"/>
    <property type="project" value="UniProtKB-UniRule"/>
</dbReference>
<dbReference type="GO" id="GO:0006423">
    <property type="term" value="P:cysteinyl-tRNA aminoacylation"/>
    <property type="evidence" value="ECO:0007669"/>
    <property type="project" value="UniProtKB-UniRule"/>
</dbReference>
<dbReference type="CDD" id="cd00672">
    <property type="entry name" value="CysRS_core"/>
    <property type="match status" value="1"/>
</dbReference>
<dbReference type="FunFam" id="3.40.50.620:FF:000068">
    <property type="entry name" value="Cysteine--tRNA ligase"/>
    <property type="match status" value="1"/>
</dbReference>
<dbReference type="Gene3D" id="1.20.120.1910">
    <property type="entry name" value="Cysteine-tRNA ligase, C-terminal anti-codon recognition domain"/>
    <property type="match status" value="1"/>
</dbReference>
<dbReference type="Gene3D" id="3.40.50.620">
    <property type="entry name" value="HUPs"/>
    <property type="match status" value="1"/>
</dbReference>
<dbReference type="HAMAP" id="MF_00041">
    <property type="entry name" value="Cys_tRNA_synth"/>
    <property type="match status" value="1"/>
</dbReference>
<dbReference type="InterPro" id="IPR015803">
    <property type="entry name" value="Cys-tRNA-ligase"/>
</dbReference>
<dbReference type="InterPro" id="IPR024909">
    <property type="entry name" value="Cys-tRNA/MSH_ligase"/>
</dbReference>
<dbReference type="InterPro" id="IPR056411">
    <property type="entry name" value="CysS_C"/>
</dbReference>
<dbReference type="InterPro" id="IPR014729">
    <property type="entry name" value="Rossmann-like_a/b/a_fold"/>
</dbReference>
<dbReference type="InterPro" id="IPR032678">
    <property type="entry name" value="tRNA-synt_1_cat_dom"/>
</dbReference>
<dbReference type="InterPro" id="IPR009080">
    <property type="entry name" value="tRNAsynth_Ia_anticodon-bd"/>
</dbReference>
<dbReference type="NCBIfam" id="TIGR00435">
    <property type="entry name" value="cysS"/>
    <property type="match status" value="1"/>
</dbReference>
<dbReference type="PANTHER" id="PTHR10890:SF3">
    <property type="entry name" value="CYSTEINE--TRNA LIGASE, CYTOPLASMIC"/>
    <property type="match status" value="1"/>
</dbReference>
<dbReference type="PANTHER" id="PTHR10890">
    <property type="entry name" value="CYSTEINYL-TRNA SYNTHETASE"/>
    <property type="match status" value="1"/>
</dbReference>
<dbReference type="Pfam" id="PF23493">
    <property type="entry name" value="CysS_C"/>
    <property type="match status" value="1"/>
</dbReference>
<dbReference type="Pfam" id="PF01406">
    <property type="entry name" value="tRNA-synt_1e"/>
    <property type="match status" value="1"/>
</dbReference>
<dbReference type="PRINTS" id="PR00983">
    <property type="entry name" value="TRNASYNTHCYS"/>
</dbReference>
<dbReference type="SUPFAM" id="SSF47323">
    <property type="entry name" value="Anticodon-binding domain of a subclass of class I aminoacyl-tRNA synthetases"/>
    <property type="match status" value="1"/>
</dbReference>
<dbReference type="SUPFAM" id="SSF52374">
    <property type="entry name" value="Nucleotidylyl transferase"/>
    <property type="match status" value="1"/>
</dbReference>